<comment type="function">
    <text evidence="4 6">Core subunit of the mitochondrial membrane respiratory chain NADH dehydrogenase (Complex I) which catalyzes electron transfer from NADH through the respiratory chain, using ubiquinone as an electron acceptor. Part of the peripheral arm of the enzyme, where the electrons from NADH are accepted by flavin mononucleotide (FMN) and then passed along a chain of iron-sulfur clusters by electron tunnelling to the final acceptor ubiquinone. Contains FMN, which is the initial electron acceptor as well as one iron-sulfur cluster.</text>
</comment>
<comment type="catalytic activity">
    <reaction evidence="9">
        <text>a ubiquinone + NADH + 5 H(+)(in) = a ubiquinol + NAD(+) + 4 H(+)(out)</text>
        <dbReference type="Rhea" id="RHEA:29091"/>
        <dbReference type="Rhea" id="RHEA-COMP:9565"/>
        <dbReference type="Rhea" id="RHEA-COMP:9566"/>
        <dbReference type="ChEBI" id="CHEBI:15378"/>
        <dbReference type="ChEBI" id="CHEBI:16389"/>
        <dbReference type="ChEBI" id="CHEBI:17976"/>
        <dbReference type="ChEBI" id="CHEBI:57540"/>
        <dbReference type="ChEBI" id="CHEBI:57945"/>
        <dbReference type="EC" id="7.1.1.2"/>
    </reaction>
    <physiologicalReaction direction="left-to-right" evidence="9">
        <dbReference type="Rhea" id="RHEA:29092"/>
    </physiologicalReaction>
</comment>
<comment type="cofactor">
    <cofactor evidence="4">
        <name>FMN</name>
        <dbReference type="ChEBI" id="CHEBI:58210"/>
    </cofactor>
    <text evidence="4">Binds 1 FMN.</text>
</comment>
<comment type="cofactor">
    <cofactor evidence="4">
        <name>[4Fe-4S] cluster</name>
        <dbReference type="ChEBI" id="CHEBI:49883"/>
    </cofactor>
    <text evidence="4">Binds 1 [4Fe-4S] cluster.</text>
</comment>
<comment type="subunit">
    <text evidence="4 5 6">Core subunit of respiratory chain NADH dehydrogenase (Complex I) which is composed of 45 different subunits (PubMed:29915388, PubMed:38575788). This is a component of the flavoprotein-sulfur (FP) fragment of the enzyme (PubMed:29915388). Interacts with RAB5IF (PubMed:31536960).</text>
</comment>
<comment type="subcellular location">
    <subcellularLocation>
        <location evidence="6">Mitochondrion inner membrane</location>
        <topology evidence="6">Peripheral membrane protein</topology>
        <orientation evidence="6">Matrix side</orientation>
    </subcellularLocation>
</comment>
<comment type="similarity">
    <text evidence="8">Belongs to the complex I 51 kDa subunit family.</text>
</comment>
<evidence type="ECO:0000250" key="1"/>
<evidence type="ECO:0000250" key="2">
    <source>
        <dbReference type="UniProtKB" id="P49821"/>
    </source>
</evidence>
<evidence type="ECO:0000269" key="3">
    <source>
    </source>
</evidence>
<evidence type="ECO:0000269" key="4">
    <source>
    </source>
</evidence>
<evidence type="ECO:0000269" key="5">
    <source>
    </source>
</evidence>
<evidence type="ECO:0000269" key="6">
    <source>
    </source>
</evidence>
<evidence type="ECO:0000303" key="7">
    <source>
    </source>
</evidence>
<evidence type="ECO:0000305" key="8"/>
<evidence type="ECO:0000305" key="9">
    <source>
    </source>
</evidence>
<evidence type="ECO:0000312" key="10">
    <source>
        <dbReference type="MGI" id="MGI:107851"/>
    </source>
</evidence>
<evidence type="ECO:0007744" key="11">
    <source>
        <dbReference type="PDB" id="6G2J"/>
    </source>
</evidence>
<evidence type="ECO:0007744" key="12">
    <source>
        <dbReference type="PDB" id="6G72"/>
    </source>
</evidence>
<evidence type="ECO:0007744" key="13">
    <source>
        <dbReference type="PDB" id="8PW5"/>
    </source>
</evidence>
<evidence type="ECO:0007744" key="14">
    <source>
    </source>
</evidence>
<evidence type="ECO:0007744" key="15">
    <source>
    </source>
</evidence>
<evidence type="ECO:0007744" key="16">
    <source>
    </source>
</evidence>
<evidence type="ECO:0007829" key="17">
    <source>
        <dbReference type="PDB" id="6G2J"/>
    </source>
</evidence>
<evidence type="ECO:0007829" key="18">
    <source>
        <dbReference type="PDB" id="6ZTQ"/>
    </source>
</evidence>
<evidence type="ECO:0007829" key="19">
    <source>
        <dbReference type="PDB" id="8IBA"/>
    </source>
</evidence>
<evidence type="ECO:0007829" key="20">
    <source>
        <dbReference type="PDB" id="8OM1"/>
    </source>
</evidence>
<evidence type="ECO:0007829" key="21">
    <source>
        <dbReference type="PDB" id="8XNL"/>
    </source>
</evidence>
<accession>Q91YT0</accession>
<proteinExistence type="evidence at protein level"/>
<reference key="1">
    <citation type="journal article" date="2005" name="Science">
        <title>The transcriptional landscape of the mammalian genome.</title>
        <authorList>
            <person name="Carninci P."/>
            <person name="Kasukawa T."/>
            <person name="Katayama S."/>
            <person name="Gough J."/>
            <person name="Frith M.C."/>
            <person name="Maeda N."/>
            <person name="Oyama R."/>
            <person name="Ravasi T."/>
            <person name="Lenhard B."/>
            <person name="Wells C."/>
            <person name="Kodzius R."/>
            <person name="Shimokawa K."/>
            <person name="Bajic V.B."/>
            <person name="Brenner S.E."/>
            <person name="Batalov S."/>
            <person name="Forrest A.R."/>
            <person name="Zavolan M."/>
            <person name="Davis M.J."/>
            <person name="Wilming L.G."/>
            <person name="Aidinis V."/>
            <person name="Allen J.E."/>
            <person name="Ambesi-Impiombato A."/>
            <person name="Apweiler R."/>
            <person name="Aturaliya R.N."/>
            <person name="Bailey T.L."/>
            <person name="Bansal M."/>
            <person name="Baxter L."/>
            <person name="Beisel K.W."/>
            <person name="Bersano T."/>
            <person name="Bono H."/>
            <person name="Chalk A.M."/>
            <person name="Chiu K.P."/>
            <person name="Choudhary V."/>
            <person name="Christoffels A."/>
            <person name="Clutterbuck D.R."/>
            <person name="Crowe M.L."/>
            <person name="Dalla E."/>
            <person name="Dalrymple B.P."/>
            <person name="de Bono B."/>
            <person name="Della Gatta G."/>
            <person name="di Bernardo D."/>
            <person name="Down T."/>
            <person name="Engstrom P."/>
            <person name="Fagiolini M."/>
            <person name="Faulkner G."/>
            <person name="Fletcher C.F."/>
            <person name="Fukushima T."/>
            <person name="Furuno M."/>
            <person name="Futaki S."/>
            <person name="Gariboldi M."/>
            <person name="Georgii-Hemming P."/>
            <person name="Gingeras T.R."/>
            <person name="Gojobori T."/>
            <person name="Green R.E."/>
            <person name="Gustincich S."/>
            <person name="Harbers M."/>
            <person name="Hayashi Y."/>
            <person name="Hensch T.K."/>
            <person name="Hirokawa N."/>
            <person name="Hill D."/>
            <person name="Huminiecki L."/>
            <person name="Iacono M."/>
            <person name="Ikeo K."/>
            <person name="Iwama A."/>
            <person name="Ishikawa T."/>
            <person name="Jakt M."/>
            <person name="Kanapin A."/>
            <person name="Katoh M."/>
            <person name="Kawasawa Y."/>
            <person name="Kelso J."/>
            <person name="Kitamura H."/>
            <person name="Kitano H."/>
            <person name="Kollias G."/>
            <person name="Krishnan S.P."/>
            <person name="Kruger A."/>
            <person name="Kummerfeld S.K."/>
            <person name="Kurochkin I.V."/>
            <person name="Lareau L.F."/>
            <person name="Lazarevic D."/>
            <person name="Lipovich L."/>
            <person name="Liu J."/>
            <person name="Liuni S."/>
            <person name="McWilliam S."/>
            <person name="Madan Babu M."/>
            <person name="Madera M."/>
            <person name="Marchionni L."/>
            <person name="Matsuda H."/>
            <person name="Matsuzawa S."/>
            <person name="Miki H."/>
            <person name="Mignone F."/>
            <person name="Miyake S."/>
            <person name="Morris K."/>
            <person name="Mottagui-Tabar S."/>
            <person name="Mulder N."/>
            <person name="Nakano N."/>
            <person name="Nakauchi H."/>
            <person name="Ng P."/>
            <person name="Nilsson R."/>
            <person name="Nishiguchi S."/>
            <person name="Nishikawa S."/>
            <person name="Nori F."/>
            <person name="Ohara O."/>
            <person name="Okazaki Y."/>
            <person name="Orlando V."/>
            <person name="Pang K.C."/>
            <person name="Pavan W.J."/>
            <person name="Pavesi G."/>
            <person name="Pesole G."/>
            <person name="Petrovsky N."/>
            <person name="Piazza S."/>
            <person name="Reed J."/>
            <person name="Reid J.F."/>
            <person name="Ring B.Z."/>
            <person name="Ringwald M."/>
            <person name="Rost B."/>
            <person name="Ruan Y."/>
            <person name="Salzberg S.L."/>
            <person name="Sandelin A."/>
            <person name="Schneider C."/>
            <person name="Schoenbach C."/>
            <person name="Sekiguchi K."/>
            <person name="Semple C.A."/>
            <person name="Seno S."/>
            <person name="Sessa L."/>
            <person name="Sheng Y."/>
            <person name="Shibata Y."/>
            <person name="Shimada H."/>
            <person name="Shimada K."/>
            <person name="Silva D."/>
            <person name="Sinclair B."/>
            <person name="Sperling S."/>
            <person name="Stupka E."/>
            <person name="Sugiura K."/>
            <person name="Sultana R."/>
            <person name="Takenaka Y."/>
            <person name="Taki K."/>
            <person name="Tammoja K."/>
            <person name="Tan S.L."/>
            <person name="Tang S."/>
            <person name="Taylor M.S."/>
            <person name="Tegner J."/>
            <person name="Teichmann S.A."/>
            <person name="Ueda H.R."/>
            <person name="van Nimwegen E."/>
            <person name="Verardo R."/>
            <person name="Wei C.L."/>
            <person name="Yagi K."/>
            <person name="Yamanishi H."/>
            <person name="Zabarovsky E."/>
            <person name="Zhu S."/>
            <person name="Zimmer A."/>
            <person name="Hide W."/>
            <person name="Bult C."/>
            <person name="Grimmond S.M."/>
            <person name="Teasdale R.D."/>
            <person name="Liu E.T."/>
            <person name="Brusic V."/>
            <person name="Quackenbush J."/>
            <person name="Wahlestedt C."/>
            <person name="Mattick J.S."/>
            <person name="Hume D.A."/>
            <person name="Kai C."/>
            <person name="Sasaki D."/>
            <person name="Tomaru Y."/>
            <person name="Fukuda S."/>
            <person name="Kanamori-Katayama M."/>
            <person name="Suzuki M."/>
            <person name="Aoki J."/>
            <person name="Arakawa T."/>
            <person name="Iida J."/>
            <person name="Imamura K."/>
            <person name="Itoh M."/>
            <person name="Kato T."/>
            <person name="Kawaji H."/>
            <person name="Kawagashira N."/>
            <person name="Kawashima T."/>
            <person name="Kojima M."/>
            <person name="Kondo S."/>
            <person name="Konno H."/>
            <person name="Nakano K."/>
            <person name="Ninomiya N."/>
            <person name="Nishio T."/>
            <person name="Okada M."/>
            <person name="Plessy C."/>
            <person name="Shibata K."/>
            <person name="Shiraki T."/>
            <person name="Suzuki S."/>
            <person name="Tagami M."/>
            <person name="Waki K."/>
            <person name="Watahiki A."/>
            <person name="Okamura-Oho Y."/>
            <person name="Suzuki H."/>
            <person name="Kawai J."/>
            <person name="Hayashizaki Y."/>
        </authorList>
    </citation>
    <scope>NUCLEOTIDE SEQUENCE [LARGE SCALE MRNA]</scope>
    <source>
        <strain>C57BL/6J</strain>
    </source>
</reference>
<reference key="2">
    <citation type="journal article" date="2004" name="Genome Res.">
        <title>The status, quality, and expansion of the NIH full-length cDNA project: the Mammalian Gene Collection (MGC).</title>
        <authorList>
            <consortium name="The MGC Project Team"/>
        </authorList>
    </citation>
    <scope>NUCLEOTIDE SEQUENCE [LARGE SCALE MRNA]</scope>
    <source>
        <strain>FVB/N</strain>
        <tissue>Kidney</tissue>
    </source>
</reference>
<reference key="3">
    <citation type="journal article" date="2000" name="Electrophoresis">
        <title>Proteome analysis of mouse brain: two-dimensional electrophoresis profiles of tissue proteins during the course of aging.</title>
        <authorList>
            <person name="Tsugita A."/>
            <person name="Kawakami T."/>
            <person name="Uchida T."/>
            <person name="Sakai T."/>
            <person name="Kamo M."/>
            <person name="Matsui T."/>
            <person name="Watanabe Y."/>
            <person name="Morimasa T."/>
            <person name="Hosokawa K."/>
            <person name="Toda T."/>
        </authorList>
    </citation>
    <scope>PROTEIN SEQUENCE OF 21-29</scope>
    <source>
        <strain>C57BL/6J</strain>
        <tissue>Brain</tissue>
    </source>
</reference>
<reference key="4">
    <citation type="submission" date="2009-01" db="UniProtKB">
        <authorList>
            <person name="Lubec G."/>
            <person name="Klug S."/>
            <person name="Kang S.U."/>
            <person name="Sunyer B."/>
            <person name="Chen W.-Q."/>
        </authorList>
    </citation>
    <scope>PROTEIN SEQUENCE OF 29-48; 72-81; 89-126; 138-147; 153-219; 258-267; 275-297; 303-329; 370-375; 387-394 AND 402-449</scope>
    <scope>IDENTIFICATION BY MASS SPECTROMETRY</scope>
    <source>
        <strain>C57BL/6J</strain>
        <strain>OF1</strain>
        <tissue>Brain</tissue>
        <tissue>Hippocampus</tissue>
    </source>
</reference>
<reference key="5">
    <citation type="journal article" date="2010" name="Cell">
        <title>A tissue-specific atlas of mouse protein phosphorylation and expression.</title>
        <authorList>
            <person name="Huttlin E.L."/>
            <person name="Jedrychowski M.P."/>
            <person name="Elias J.E."/>
            <person name="Goswami T."/>
            <person name="Rad R."/>
            <person name="Beausoleil S.A."/>
            <person name="Villen J."/>
            <person name="Haas W."/>
            <person name="Sowa M.E."/>
            <person name="Gygi S.P."/>
        </authorList>
    </citation>
    <scope>IDENTIFICATION BY MASS SPECTROMETRY [LARGE SCALE ANALYSIS]</scope>
    <source>
        <tissue>Brain</tissue>
        <tissue>Brown adipose tissue</tissue>
        <tissue>Heart</tissue>
        <tissue>Kidney</tissue>
        <tissue>Liver</tissue>
        <tissue>Lung</tissue>
        <tissue>Pancreas</tissue>
        <tissue>Spleen</tissue>
        <tissue>Testis</tissue>
    </source>
</reference>
<reference key="6">
    <citation type="journal article" date="2013" name="Mol. Cell">
        <title>SIRT5-mediated lysine desuccinylation impacts diverse metabolic pathways.</title>
        <authorList>
            <person name="Park J."/>
            <person name="Chen Y."/>
            <person name="Tishkoff D.X."/>
            <person name="Peng C."/>
            <person name="Tan M."/>
            <person name="Dai L."/>
            <person name="Xie Z."/>
            <person name="Zhang Y."/>
            <person name="Zwaans B.M."/>
            <person name="Skinner M.E."/>
            <person name="Lombard D.B."/>
            <person name="Zhao Y."/>
        </authorList>
    </citation>
    <scope>SUCCINYLATION [LARGE SCALE ANALYSIS] AT LYS-81</scope>
    <scope>IDENTIFICATION BY MASS SPECTROMETRY [LARGE SCALE ANALYSIS]</scope>
    <source>
        <tissue>Liver</tissue>
    </source>
</reference>
<reference key="7">
    <citation type="journal article" date="2013" name="Proc. Natl. Acad. Sci. U.S.A.">
        <title>Label-free quantitative proteomics of the lysine acetylome in mitochondria identifies substrates of SIRT3 in metabolic pathways.</title>
        <authorList>
            <person name="Rardin M.J."/>
            <person name="Newman J.C."/>
            <person name="Held J.M."/>
            <person name="Cusack M.P."/>
            <person name="Sorensen D.J."/>
            <person name="Li B."/>
            <person name="Schilling B."/>
            <person name="Mooney S.D."/>
            <person name="Kahn C.R."/>
            <person name="Verdin E."/>
            <person name="Gibson B.W."/>
        </authorList>
    </citation>
    <scope>ACETYLATION [LARGE SCALE ANALYSIS] AT LYS-81; LYS-104 AND LYS-375</scope>
    <scope>IDENTIFICATION BY MASS SPECTROMETRY [LARGE SCALE ANALYSIS]</scope>
    <source>
        <tissue>Liver</tissue>
    </source>
</reference>
<reference key="8">
    <citation type="journal article" date="2014" name="Mol. Cell. Proteomics">
        <title>Immunoaffinity enrichment and mass spectrometry analysis of protein methylation.</title>
        <authorList>
            <person name="Guo A."/>
            <person name="Gu H."/>
            <person name="Zhou J."/>
            <person name="Mulhern D."/>
            <person name="Wang Y."/>
            <person name="Lee K.A."/>
            <person name="Yang V."/>
            <person name="Aguiar M."/>
            <person name="Kornhauser J."/>
            <person name="Jia X."/>
            <person name="Ren J."/>
            <person name="Beausoleil S.A."/>
            <person name="Silva J.C."/>
            <person name="Vemulapalli V."/>
            <person name="Bedford M.T."/>
            <person name="Comb M.J."/>
        </authorList>
    </citation>
    <scope>METHYLATION [LARGE SCALE ANALYSIS] AT ARG-257</scope>
    <scope>IDENTIFICATION BY MASS SPECTROMETRY [LARGE SCALE ANALYSIS]</scope>
    <source>
        <tissue>Brain</tissue>
    </source>
</reference>
<reference key="9">
    <citation type="journal article" date="2019" name="IScience">
        <title>Rewiring of the Human Mitochondrial Interactome during Neuronal Reprogramming Reveals Regulators of the Respirasome and Neurogenesis.</title>
        <authorList>
            <person name="Moutaoufik M.T."/>
            <person name="Malty R."/>
            <person name="Amin S."/>
            <person name="Zhang Q."/>
            <person name="Phanse S."/>
            <person name="Gagarinova A."/>
            <person name="Zilocchi M."/>
            <person name="Hoell L."/>
            <person name="Minic Z."/>
            <person name="Gagarinova M."/>
            <person name="Aoki H."/>
            <person name="Stockwell J."/>
            <person name="Jessulat M."/>
            <person name="Goebels F."/>
            <person name="Broderick K."/>
            <person name="Scott N.E."/>
            <person name="Vlasblom J."/>
            <person name="Musso G."/>
            <person name="Prasad B."/>
            <person name="Lamantea E."/>
            <person name="Garavaglia B."/>
            <person name="Rajput A."/>
            <person name="Murayama K."/>
            <person name="Okazaki Y."/>
            <person name="Foster L.J."/>
            <person name="Bader G.D."/>
            <person name="Cayabyab F.S."/>
            <person name="Babu M."/>
        </authorList>
    </citation>
    <scope>INTERACTION WITH RAB5IF</scope>
</reference>
<reference evidence="11 12" key="10">
    <citation type="journal article" date="2018" name="Nat. Struct. Mol. Biol.">
        <title>Cryo-EM structures of complex I from mouse heart mitochondria in two biochemically defined states.</title>
        <authorList>
            <person name="Agip A.A."/>
            <person name="Blaza J.N."/>
            <person name="Bridges H.R."/>
            <person name="Viscomi C."/>
            <person name="Rawson S."/>
            <person name="Muench S.P."/>
            <person name="Hirst J."/>
        </authorList>
    </citation>
    <scope>STRUCTURE BY ELECTRON MICROSCOPY (3.30 ANGSTROMS) OF 30-457</scope>
    <scope>FUNCTION</scope>
    <scope>CATALYTIC ACTIVITY</scope>
    <scope>COFACTOR</scope>
    <scope>SUBUNIT</scope>
</reference>
<reference evidence="13" key="11">
    <citation type="journal article" date="2024" name="Nat. Struct. Mol. Biol.">
        <title>SCAF1 drives the compositional diversity of mammalian respirasomes.</title>
        <authorList>
            <person name="Vercellino I."/>
            <person name="Sazanov L.A."/>
        </authorList>
    </citation>
    <scope>STRUCTURE BY ELECTRON MICROSCOPY (3.60 ANGSTROMS) IN COMPLEX WITH MITOCHONDRIAL RESPIRATORY SUPERCOMPLEX</scope>
    <scope>FUNCTION</scope>
    <scope>SUBCELLULAR LOCATION</scope>
    <scope>SUBUNIT</scope>
</reference>
<organism>
    <name type="scientific">Mus musculus</name>
    <name type="common">Mouse</name>
    <dbReference type="NCBI Taxonomy" id="10090"/>
    <lineage>
        <taxon>Eukaryota</taxon>
        <taxon>Metazoa</taxon>
        <taxon>Chordata</taxon>
        <taxon>Craniata</taxon>
        <taxon>Vertebrata</taxon>
        <taxon>Euteleostomi</taxon>
        <taxon>Mammalia</taxon>
        <taxon>Eutheria</taxon>
        <taxon>Euarchontoglires</taxon>
        <taxon>Glires</taxon>
        <taxon>Rodentia</taxon>
        <taxon>Myomorpha</taxon>
        <taxon>Muroidea</taxon>
        <taxon>Muridae</taxon>
        <taxon>Murinae</taxon>
        <taxon>Mus</taxon>
        <taxon>Mus</taxon>
    </lineage>
</organism>
<name>NDUV1_MOUSE</name>
<feature type="transit peptide" description="Mitochondrion" evidence="3">
    <location>
        <begin position="1"/>
        <end position="20"/>
    </location>
</feature>
<feature type="chain" id="PRO_0000019978" description="NADH dehydrogenase [ubiquinone] flavoprotein 1, mitochondrial">
    <location>
        <begin position="21"/>
        <end position="464"/>
    </location>
</feature>
<feature type="binding site" evidence="1">
    <location>
        <begin position="87"/>
        <end position="96"/>
    </location>
    <ligand>
        <name>NADH</name>
        <dbReference type="ChEBI" id="CHEBI:57945"/>
    </ligand>
</feature>
<feature type="binding site" evidence="1">
    <location>
        <begin position="199"/>
        <end position="247"/>
    </location>
    <ligand>
        <name>FMN</name>
        <dbReference type="ChEBI" id="CHEBI:58210"/>
    </ligand>
</feature>
<feature type="binding site" evidence="4 11 12">
    <location>
        <position position="379"/>
    </location>
    <ligand>
        <name>[4Fe-4S] cluster</name>
        <dbReference type="ChEBI" id="CHEBI:49883"/>
    </ligand>
</feature>
<feature type="binding site" evidence="4 11 12">
    <location>
        <position position="382"/>
    </location>
    <ligand>
        <name>[4Fe-4S] cluster</name>
        <dbReference type="ChEBI" id="CHEBI:49883"/>
    </ligand>
</feature>
<feature type="binding site" evidence="4 11 12">
    <location>
        <position position="385"/>
    </location>
    <ligand>
        <name>[4Fe-4S] cluster</name>
        <dbReference type="ChEBI" id="CHEBI:49883"/>
    </ligand>
</feature>
<feature type="binding site" evidence="4 11 12">
    <location>
        <position position="425"/>
    </location>
    <ligand>
        <name>[4Fe-4S] cluster</name>
        <dbReference type="ChEBI" id="CHEBI:49883"/>
    </ligand>
</feature>
<feature type="modified residue" description="N6-acetyllysine; alternate" evidence="14">
    <location>
        <position position="81"/>
    </location>
</feature>
<feature type="modified residue" description="N6-succinyllysine; alternate" evidence="15">
    <location>
        <position position="81"/>
    </location>
</feature>
<feature type="modified residue" description="N6-acetyllysine" evidence="14">
    <location>
        <position position="104"/>
    </location>
</feature>
<feature type="modified residue" description="Omega-N-methylarginine" evidence="16">
    <location>
        <position position="257"/>
    </location>
</feature>
<feature type="modified residue" description="N6-acetyllysine" evidence="14">
    <location>
        <position position="375"/>
    </location>
</feature>
<feature type="turn" evidence="20">
    <location>
        <begin position="37"/>
        <end position="39"/>
    </location>
</feature>
<feature type="turn" evidence="20">
    <location>
        <begin position="43"/>
        <end position="46"/>
    </location>
</feature>
<feature type="strand" evidence="18">
    <location>
        <begin position="47"/>
        <end position="49"/>
    </location>
</feature>
<feature type="helix" evidence="20">
    <location>
        <begin position="53"/>
        <end position="58"/>
    </location>
</feature>
<feature type="turn" evidence="20">
    <location>
        <begin position="59"/>
        <end position="62"/>
    </location>
</feature>
<feature type="helix" evidence="20">
    <location>
        <begin position="65"/>
        <end position="70"/>
    </location>
</feature>
<feature type="helix" evidence="20">
    <location>
        <begin position="72"/>
        <end position="83"/>
    </location>
</feature>
<feature type="strand" evidence="20">
    <location>
        <begin position="88"/>
        <end position="91"/>
    </location>
</feature>
<feature type="helix" evidence="20">
    <location>
        <begin position="95"/>
        <end position="99"/>
    </location>
</feature>
<feature type="helix" evidence="20">
    <location>
        <begin position="100"/>
        <end position="102"/>
    </location>
</feature>
<feature type="strand" evidence="18">
    <location>
        <begin position="107"/>
        <end position="109"/>
    </location>
</feature>
<feature type="strand" evidence="20">
    <location>
        <begin position="112"/>
        <end position="117"/>
    </location>
</feature>
<feature type="helix" evidence="20">
    <location>
        <begin position="126"/>
        <end position="133"/>
    </location>
</feature>
<feature type="helix" evidence="20">
    <location>
        <begin position="135"/>
        <end position="149"/>
    </location>
</feature>
<feature type="strand" evidence="20">
    <location>
        <begin position="152"/>
        <end position="158"/>
    </location>
</feature>
<feature type="helix" evidence="20">
    <location>
        <begin position="163"/>
        <end position="178"/>
    </location>
</feature>
<feature type="strand" evidence="20">
    <location>
        <begin position="181"/>
        <end position="183"/>
    </location>
</feature>
<feature type="helix" evidence="20">
    <location>
        <begin position="186"/>
        <end position="188"/>
    </location>
</feature>
<feature type="strand" evidence="20">
    <location>
        <begin position="193"/>
        <end position="199"/>
    </location>
</feature>
<feature type="helix" evidence="20">
    <location>
        <begin position="204"/>
        <end position="207"/>
    </location>
</feature>
<feature type="helix" evidence="20">
    <location>
        <begin position="209"/>
        <end position="216"/>
    </location>
</feature>
<feature type="strand" evidence="20">
    <location>
        <begin position="226"/>
        <end position="228"/>
    </location>
</feature>
<feature type="turn" evidence="20">
    <location>
        <begin position="230"/>
        <end position="232"/>
    </location>
</feature>
<feature type="helix" evidence="20">
    <location>
        <begin position="235"/>
        <end position="237"/>
    </location>
</feature>
<feature type="strand" evidence="20">
    <location>
        <begin position="240"/>
        <end position="244"/>
    </location>
</feature>
<feature type="helix" evidence="20">
    <location>
        <begin position="245"/>
        <end position="249"/>
    </location>
</feature>
<feature type="helix" evidence="20">
    <location>
        <begin position="251"/>
        <end position="257"/>
    </location>
</feature>
<feature type="helix" evidence="20">
    <location>
        <begin position="259"/>
        <end position="262"/>
    </location>
</feature>
<feature type="strand" evidence="20">
    <location>
        <begin position="265"/>
        <end position="267"/>
    </location>
</feature>
<feature type="strand" evidence="17">
    <location>
        <begin position="268"/>
        <end position="270"/>
    </location>
</feature>
<feature type="strand" evidence="20">
    <location>
        <begin position="272"/>
        <end position="284"/>
    </location>
</feature>
<feature type="strand" evidence="20">
    <location>
        <begin position="286"/>
        <end position="291"/>
    </location>
</feature>
<feature type="strand" evidence="19">
    <location>
        <begin position="292"/>
        <end position="295"/>
    </location>
</feature>
<feature type="helix" evidence="20">
    <location>
        <begin position="296"/>
        <end position="303"/>
    </location>
</feature>
<feature type="turn" evidence="18">
    <location>
        <begin position="308"/>
        <end position="310"/>
    </location>
</feature>
<feature type="helix" evidence="20">
    <location>
        <begin position="311"/>
        <end position="313"/>
    </location>
</feature>
<feature type="strand" evidence="20">
    <location>
        <begin position="314"/>
        <end position="321"/>
    </location>
</feature>
<feature type="strand" evidence="21">
    <location>
        <begin position="322"/>
        <end position="324"/>
    </location>
</feature>
<feature type="helix" evidence="20">
    <location>
        <begin position="329"/>
        <end position="332"/>
    </location>
</feature>
<feature type="strand" evidence="20">
    <location>
        <begin position="336"/>
        <end position="338"/>
    </location>
</feature>
<feature type="helix" evidence="20">
    <location>
        <begin position="339"/>
        <end position="344"/>
    </location>
</feature>
<feature type="strand" evidence="20">
    <location>
        <begin position="353"/>
        <end position="358"/>
    </location>
</feature>
<feature type="strand" evidence="18">
    <location>
        <begin position="359"/>
        <end position="361"/>
    </location>
</feature>
<feature type="helix" evidence="20">
    <location>
        <begin position="363"/>
        <end position="377"/>
    </location>
</feature>
<feature type="helix" evidence="20">
    <location>
        <begin position="383"/>
        <end position="401"/>
    </location>
</feature>
<feature type="helix" evidence="20">
    <location>
        <begin position="407"/>
        <end position="419"/>
    </location>
</feature>
<feature type="strand" evidence="20">
    <location>
        <begin position="422"/>
        <end position="425"/>
    </location>
</feature>
<feature type="helix" evidence="20">
    <location>
        <begin position="426"/>
        <end position="441"/>
    </location>
</feature>
<feature type="helix" evidence="20">
    <location>
        <begin position="443"/>
        <end position="457"/>
    </location>
</feature>
<sequence length="464" mass="50834">MLAARHFLGGLVPVRVSVRFSSGTTAPKKTSFGSLKDEDRIFTNLYGRHDWRLKGALRRGDWYKTKEILLKGPDWILGEMKTSGLRGRGGAGFPTGLKWSFMNKPSDGRPKYLVVNADEGEPGTCKDREIMRHDPHKLVEGCLVGGRAMGARAAYIYIRGEFYNEASNLQVAIREAYEAGLIGKNACGSDYDFDVFVVRGAGAYICGEETALIESIEGKQGKPRLKPPFPADVGVFGCPTTVANVETVAVSPTICRRGGTWFAGFGRERNSGTKLFNISGHVNHPCTVEEEMSVPLKELIEKHAGGVTGGWDNLLAVIPGGSSTPLIPKSVCETVLMDFDALVQAQTGLGTAAVIVMDRSTDIVKAIARLIEFYKHESCGQCTPCREGVDWMNKVMARFVKGDARPAEIDSLWEISKQIEGHTICALGDGAAWPVQGLIRHFRPELEDRMQRFAQQHRAWQAAS</sequence>
<dbReference type="EC" id="7.1.1.2" evidence="4"/>
<dbReference type="EMBL" id="AK075692">
    <property type="protein sequence ID" value="BAC35893.1"/>
    <property type="molecule type" value="mRNA"/>
</dbReference>
<dbReference type="EMBL" id="BC014818">
    <property type="protein sequence ID" value="AAH14818.1"/>
    <property type="molecule type" value="mRNA"/>
</dbReference>
<dbReference type="EMBL" id="BC041682">
    <property type="protein sequence ID" value="AAH41682.1"/>
    <property type="molecule type" value="mRNA"/>
</dbReference>
<dbReference type="CCDS" id="CCDS29410.1"/>
<dbReference type="PIR" id="PC7078">
    <property type="entry name" value="PC7078"/>
</dbReference>
<dbReference type="RefSeq" id="NP_598427.1">
    <property type="nucleotide sequence ID" value="NM_133666.3"/>
</dbReference>
<dbReference type="PDB" id="6G2J">
    <property type="method" value="EM"/>
    <property type="resolution" value="3.30 A"/>
    <property type="chains" value="F=30-457"/>
</dbReference>
<dbReference type="PDB" id="6G72">
    <property type="method" value="EM"/>
    <property type="resolution" value="3.90 A"/>
    <property type="chains" value="F=1-464"/>
</dbReference>
<dbReference type="PDB" id="6ZR2">
    <property type="method" value="EM"/>
    <property type="resolution" value="3.10 A"/>
    <property type="chains" value="F=1-464"/>
</dbReference>
<dbReference type="PDB" id="6ZTQ">
    <property type="method" value="EM"/>
    <property type="resolution" value="3.00 A"/>
    <property type="chains" value="F=1-464"/>
</dbReference>
<dbReference type="PDB" id="7AK5">
    <property type="method" value="EM"/>
    <property type="resolution" value="3.17 A"/>
    <property type="chains" value="F=1-464"/>
</dbReference>
<dbReference type="PDB" id="7AK6">
    <property type="method" value="EM"/>
    <property type="resolution" value="3.82 A"/>
    <property type="chains" value="F=1-464"/>
</dbReference>
<dbReference type="PDB" id="7B93">
    <property type="method" value="EM"/>
    <property type="resolution" value="3.04 A"/>
    <property type="chains" value="F=1-464"/>
</dbReference>
<dbReference type="PDB" id="7PSA">
    <property type="method" value="EM"/>
    <property type="resolution" value="3.40 A"/>
    <property type="chains" value="F=1-464"/>
</dbReference>
<dbReference type="PDB" id="8C2S">
    <property type="method" value="EM"/>
    <property type="resolution" value="3.90 A"/>
    <property type="chains" value="F=1-464"/>
</dbReference>
<dbReference type="PDB" id="8CA3">
    <property type="method" value="EM"/>
    <property type="resolution" value="3.20 A"/>
    <property type="chains" value="F=1-464"/>
</dbReference>
<dbReference type="PDB" id="8CA4">
    <property type="method" value="EM"/>
    <property type="resolution" value="3.25 A"/>
    <property type="chains" value="F=1-464"/>
</dbReference>
<dbReference type="PDB" id="8CA5">
    <property type="method" value="EM"/>
    <property type="resolution" value="3.90 A"/>
    <property type="chains" value="F=1-464"/>
</dbReference>
<dbReference type="PDB" id="8IAO">
    <property type="method" value="EM"/>
    <property type="resolution" value="4.20 A"/>
    <property type="chains" value="F=1-464"/>
</dbReference>
<dbReference type="PDB" id="8IAP">
    <property type="method" value="EM"/>
    <property type="resolution" value="3.20 A"/>
    <property type="chains" value="F=1-464"/>
</dbReference>
<dbReference type="PDB" id="8IB4">
    <property type="method" value="EM"/>
    <property type="resolution" value="4.30 A"/>
    <property type="chains" value="F=1-464"/>
</dbReference>
<dbReference type="PDB" id="8IB5">
    <property type="method" value="EM"/>
    <property type="resolution" value="3.30 A"/>
    <property type="chains" value="F=1-464"/>
</dbReference>
<dbReference type="PDB" id="8IB9">
    <property type="method" value="EM"/>
    <property type="resolution" value="4.30 A"/>
    <property type="chains" value="F=1-464"/>
</dbReference>
<dbReference type="PDB" id="8IBA">
    <property type="method" value="EM"/>
    <property type="resolution" value="3.20 A"/>
    <property type="chains" value="F=1-464"/>
</dbReference>
<dbReference type="PDB" id="8IBD">
    <property type="method" value="EM"/>
    <property type="resolution" value="4.20 A"/>
    <property type="chains" value="F=1-464"/>
</dbReference>
<dbReference type="PDB" id="8IBE">
    <property type="method" value="EM"/>
    <property type="resolution" value="3.30 A"/>
    <property type="chains" value="F=1-464"/>
</dbReference>
<dbReference type="PDB" id="8IC2">
    <property type="method" value="EM"/>
    <property type="resolution" value="6.30 A"/>
    <property type="chains" value="F=1-464"/>
</dbReference>
<dbReference type="PDB" id="8IC3">
    <property type="method" value="EM"/>
    <property type="resolution" value="3.20 A"/>
    <property type="chains" value="F=1-464"/>
</dbReference>
<dbReference type="PDB" id="8OLT">
    <property type="method" value="EM"/>
    <property type="resolution" value="2.84 A"/>
    <property type="chains" value="F=1-464"/>
</dbReference>
<dbReference type="PDB" id="8OM1">
    <property type="method" value="EM"/>
    <property type="resolution" value="2.39 A"/>
    <property type="chains" value="F=1-464"/>
</dbReference>
<dbReference type="PDB" id="8PW5">
    <property type="method" value="EM"/>
    <property type="resolution" value="3.60 A"/>
    <property type="chains" value="1=1-464"/>
</dbReference>
<dbReference type="PDB" id="8PW6">
    <property type="method" value="EM"/>
    <property type="resolution" value="3.30 A"/>
    <property type="chains" value="1=1-464"/>
</dbReference>
<dbReference type="PDB" id="8PW7">
    <property type="method" value="EM"/>
    <property type="resolution" value="3.50 A"/>
    <property type="chains" value="1=1-464"/>
</dbReference>
<dbReference type="PDB" id="8RGP">
    <property type="method" value="EM"/>
    <property type="resolution" value="3.00 A"/>
    <property type="chains" value="1=1-464"/>
</dbReference>
<dbReference type="PDB" id="8RGQ">
    <property type="method" value="EM"/>
    <property type="resolution" value="3.00 A"/>
    <property type="chains" value="1=1-464"/>
</dbReference>
<dbReference type="PDB" id="8RGR">
    <property type="method" value="EM"/>
    <property type="resolution" value="2.90 A"/>
    <property type="chains" value="1=1-464"/>
</dbReference>
<dbReference type="PDB" id="8RGT">
    <property type="method" value="EM"/>
    <property type="resolution" value="3.10 A"/>
    <property type="chains" value="1=1-464"/>
</dbReference>
<dbReference type="PDB" id="8UCA">
    <property type="method" value="EM"/>
    <property type="resolution" value="3.70 A"/>
    <property type="chains" value="V1/v1=1-457"/>
</dbReference>
<dbReference type="PDB" id="8XNL">
    <property type="method" value="EM"/>
    <property type="resolution" value="3.10 A"/>
    <property type="chains" value="F=1-464"/>
</dbReference>
<dbReference type="PDB" id="8XNM">
    <property type="method" value="EM"/>
    <property type="resolution" value="3.50 A"/>
    <property type="chains" value="F=1-464"/>
</dbReference>
<dbReference type="PDB" id="8XNN">
    <property type="method" value="EM"/>
    <property type="resolution" value="3.60 A"/>
    <property type="chains" value="F=1-464"/>
</dbReference>
<dbReference type="PDB" id="8XNO">
    <property type="method" value="EM"/>
    <property type="resolution" value="3.40 A"/>
    <property type="chains" value="F=1-464"/>
</dbReference>
<dbReference type="PDB" id="8XNP">
    <property type="method" value="EM"/>
    <property type="resolution" value="3.50 A"/>
    <property type="chains" value="F=1-464"/>
</dbReference>
<dbReference type="PDB" id="8XNQ">
    <property type="method" value="EM"/>
    <property type="resolution" value="3.70 A"/>
    <property type="chains" value="F=1-464"/>
</dbReference>
<dbReference type="PDB" id="8XNR">
    <property type="method" value="EM"/>
    <property type="resolution" value="3.30 A"/>
    <property type="chains" value="F=1-464"/>
</dbReference>
<dbReference type="PDB" id="8XNS">
    <property type="method" value="EM"/>
    <property type="resolution" value="3.50 A"/>
    <property type="chains" value="F=1-464"/>
</dbReference>
<dbReference type="PDB" id="8XNT">
    <property type="method" value="EM"/>
    <property type="resolution" value="4.10 A"/>
    <property type="chains" value="F=1-464"/>
</dbReference>
<dbReference type="PDB" id="8XNU">
    <property type="method" value="EM"/>
    <property type="resolution" value="3.60 A"/>
    <property type="chains" value="F=1-464"/>
</dbReference>
<dbReference type="PDB" id="8XNV">
    <property type="method" value="EM"/>
    <property type="resolution" value="3.30 A"/>
    <property type="chains" value="F=1-464"/>
</dbReference>
<dbReference type="PDB" id="8XNW">
    <property type="method" value="EM"/>
    <property type="resolution" value="3.60 A"/>
    <property type="chains" value="F=1-464"/>
</dbReference>
<dbReference type="PDB" id="8XNX">
    <property type="method" value="EM"/>
    <property type="resolution" value="3.50 A"/>
    <property type="chains" value="F=1-464"/>
</dbReference>
<dbReference type="PDB" id="8XNY">
    <property type="method" value="EM"/>
    <property type="resolution" value="4.10 A"/>
    <property type="chains" value="F=1-464"/>
</dbReference>
<dbReference type="PDB" id="8XNZ">
    <property type="method" value="EM"/>
    <property type="resolution" value="3.30 A"/>
    <property type="chains" value="F=1-464"/>
</dbReference>
<dbReference type="PDB" id="8XO0">
    <property type="method" value="EM"/>
    <property type="resolution" value="4.20 A"/>
    <property type="chains" value="F=1-464"/>
</dbReference>
<dbReference type="PDBsum" id="6G2J"/>
<dbReference type="PDBsum" id="6G72"/>
<dbReference type="PDBsum" id="6ZR2"/>
<dbReference type="PDBsum" id="6ZTQ"/>
<dbReference type="PDBsum" id="7AK5"/>
<dbReference type="PDBsum" id="7AK6"/>
<dbReference type="PDBsum" id="7B93"/>
<dbReference type="PDBsum" id="7PSA"/>
<dbReference type="PDBsum" id="8C2S"/>
<dbReference type="PDBsum" id="8CA3"/>
<dbReference type="PDBsum" id="8CA4"/>
<dbReference type="PDBsum" id="8CA5"/>
<dbReference type="PDBsum" id="8IAO"/>
<dbReference type="PDBsum" id="8IAP"/>
<dbReference type="PDBsum" id="8IB4"/>
<dbReference type="PDBsum" id="8IB5"/>
<dbReference type="PDBsum" id="8IB9"/>
<dbReference type="PDBsum" id="8IBA"/>
<dbReference type="PDBsum" id="8IBD"/>
<dbReference type="PDBsum" id="8IBE"/>
<dbReference type="PDBsum" id="8IC2"/>
<dbReference type="PDBsum" id="8IC3"/>
<dbReference type="PDBsum" id="8OLT"/>
<dbReference type="PDBsum" id="8OM1"/>
<dbReference type="PDBsum" id="8PW5"/>
<dbReference type="PDBsum" id="8PW6"/>
<dbReference type="PDBsum" id="8PW7"/>
<dbReference type="PDBsum" id="8RGP"/>
<dbReference type="PDBsum" id="8RGQ"/>
<dbReference type="PDBsum" id="8RGR"/>
<dbReference type="PDBsum" id="8RGT"/>
<dbReference type="PDBsum" id="8UCA"/>
<dbReference type="PDBsum" id="8XNL"/>
<dbReference type="PDBsum" id="8XNM"/>
<dbReference type="PDBsum" id="8XNN"/>
<dbReference type="PDBsum" id="8XNO"/>
<dbReference type="PDBsum" id="8XNP"/>
<dbReference type="PDBsum" id="8XNQ"/>
<dbReference type="PDBsum" id="8XNR"/>
<dbReference type="PDBsum" id="8XNS"/>
<dbReference type="PDBsum" id="8XNT"/>
<dbReference type="PDBsum" id="8XNU"/>
<dbReference type="PDBsum" id="8XNV"/>
<dbReference type="PDBsum" id="8XNW"/>
<dbReference type="PDBsum" id="8XNX"/>
<dbReference type="PDBsum" id="8XNY"/>
<dbReference type="PDBsum" id="8XNZ"/>
<dbReference type="PDBsum" id="8XO0"/>
<dbReference type="EMDB" id="EMD-11377"/>
<dbReference type="EMDB" id="EMD-11424"/>
<dbReference type="EMDB" id="EMD-11810"/>
<dbReference type="EMDB" id="EMD-11811"/>
<dbReference type="EMDB" id="EMD-12095"/>
<dbReference type="EMDB" id="EMD-13611"/>
<dbReference type="EMDB" id="EMD-16398"/>
<dbReference type="EMDB" id="EMD-16516"/>
<dbReference type="EMDB" id="EMD-16517"/>
<dbReference type="EMDB" id="EMD-16518"/>
<dbReference type="EMDB" id="EMD-16962"/>
<dbReference type="EMDB" id="EMD-16965"/>
<dbReference type="EMDB" id="EMD-17989"/>
<dbReference type="EMDB" id="EMD-17990"/>
<dbReference type="EMDB" id="EMD-17991"/>
<dbReference type="EMDB" id="EMD-19145"/>
<dbReference type="EMDB" id="EMD-19146"/>
<dbReference type="EMDB" id="EMD-19147"/>
<dbReference type="EMDB" id="EMD-19148"/>
<dbReference type="EMDB" id="EMD-35313"/>
<dbReference type="EMDB" id="EMD-35314"/>
<dbReference type="EMDB" id="EMD-35331"/>
<dbReference type="EMDB" id="EMD-35332"/>
<dbReference type="EMDB" id="EMD-35336"/>
<dbReference type="EMDB" id="EMD-35337"/>
<dbReference type="EMDB" id="EMD-35340"/>
<dbReference type="EMDB" id="EMD-35341"/>
<dbReference type="EMDB" id="EMD-35352"/>
<dbReference type="EMDB" id="EMD-35353"/>
<dbReference type="EMDB" id="EMD-38506"/>
<dbReference type="EMDB" id="EMD-38507"/>
<dbReference type="EMDB" id="EMD-38508"/>
<dbReference type="EMDB" id="EMD-38509"/>
<dbReference type="EMDB" id="EMD-38510"/>
<dbReference type="EMDB" id="EMD-38511"/>
<dbReference type="EMDB" id="EMD-38512"/>
<dbReference type="EMDB" id="EMD-38513"/>
<dbReference type="EMDB" id="EMD-38514"/>
<dbReference type="EMDB" id="EMD-38515"/>
<dbReference type="EMDB" id="EMD-38516"/>
<dbReference type="EMDB" id="EMD-38517"/>
<dbReference type="EMDB" id="EMD-38518"/>
<dbReference type="EMDB" id="EMD-38519"/>
<dbReference type="EMDB" id="EMD-38520"/>
<dbReference type="EMDB" id="EMD-38521"/>
<dbReference type="EMDB" id="EMD-42122"/>
<dbReference type="EMDB" id="EMD-4345"/>
<dbReference type="EMDB" id="EMD-4356"/>
<dbReference type="SMR" id="Q91YT0"/>
<dbReference type="BioGRID" id="201719">
    <property type="interactions" value="80"/>
</dbReference>
<dbReference type="ComplexPortal" id="CPX-266">
    <property type="entry name" value="Mitochondrial respiratory chain complex I"/>
</dbReference>
<dbReference type="CORUM" id="Q91YT0"/>
<dbReference type="FunCoup" id="Q91YT0">
    <property type="interactions" value="2807"/>
</dbReference>
<dbReference type="IntAct" id="Q91YT0">
    <property type="interactions" value="7"/>
</dbReference>
<dbReference type="MINT" id="Q91YT0"/>
<dbReference type="STRING" id="10090.ENSMUSP00000042967"/>
<dbReference type="GlyGen" id="Q91YT0">
    <property type="glycosylation" value="1 site, 1 O-linked glycan (1 site)"/>
</dbReference>
<dbReference type="iPTMnet" id="Q91YT0"/>
<dbReference type="PhosphoSitePlus" id="Q91YT0"/>
<dbReference type="SwissPalm" id="Q91YT0"/>
<dbReference type="jPOST" id="Q91YT0"/>
<dbReference type="PaxDb" id="10090-ENSMUSP00000042967"/>
<dbReference type="PeptideAtlas" id="Q91YT0"/>
<dbReference type="ProteomicsDB" id="287471"/>
<dbReference type="Pumba" id="Q91YT0"/>
<dbReference type="Antibodypedia" id="30465">
    <property type="antibodies" value="258 antibodies from 30 providers"/>
</dbReference>
<dbReference type="DNASU" id="17995"/>
<dbReference type="Ensembl" id="ENSMUST00000042497.14">
    <property type="protein sequence ID" value="ENSMUSP00000042967.8"/>
    <property type="gene ID" value="ENSMUSG00000037916.15"/>
</dbReference>
<dbReference type="GeneID" id="17995"/>
<dbReference type="KEGG" id="mmu:17995"/>
<dbReference type="UCSC" id="uc008fye.2">
    <property type="organism name" value="mouse"/>
</dbReference>
<dbReference type="AGR" id="MGI:107851"/>
<dbReference type="CTD" id="4723"/>
<dbReference type="MGI" id="MGI:107851">
    <property type="gene designation" value="Ndufv1"/>
</dbReference>
<dbReference type="VEuPathDB" id="HostDB:ENSMUSG00000037916"/>
<dbReference type="eggNOG" id="KOG2658">
    <property type="taxonomic scope" value="Eukaryota"/>
</dbReference>
<dbReference type="GeneTree" id="ENSGT00390000010641"/>
<dbReference type="HOGENOM" id="CLU_014881_1_0_1"/>
<dbReference type="InParanoid" id="Q91YT0"/>
<dbReference type="OMA" id="QGDGKPH"/>
<dbReference type="OrthoDB" id="42889at2759"/>
<dbReference type="PhylomeDB" id="Q91YT0"/>
<dbReference type="TreeFam" id="TF300381"/>
<dbReference type="Reactome" id="R-MMU-611105">
    <property type="pathway name" value="Respiratory electron transport"/>
</dbReference>
<dbReference type="Reactome" id="R-MMU-6799198">
    <property type="pathway name" value="Complex I biogenesis"/>
</dbReference>
<dbReference type="Reactome" id="R-MMU-9837999">
    <property type="pathway name" value="Mitochondrial protein degradation"/>
</dbReference>
<dbReference type="BioGRID-ORCS" id="17995">
    <property type="hits" value="23 hits in 64 CRISPR screens"/>
</dbReference>
<dbReference type="CD-CODE" id="CE726F99">
    <property type="entry name" value="Postsynaptic density"/>
</dbReference>
<dbReference type="ChiTaRS" id="Ndufv1">
    <property type="organism name" value="mouse"/>
</dbReference>
<dbReference type="PRO" id="PR:Q91YT0"/>
<dbReference type="Proteomes" id="UP000000589">
    <property type="component" value="Chromosome 19"/>
</dbReference>
<dbReference type="RNAct" id="Q91YT0">
    <property type="molecule type" value="protein"/>
</dbReference>
<dbReference type="Bgee" id="ENSMUSG00000037916">
    <property type="expression patterns" value="Expressed in soleus muscle and 271 other cell types or tissues"/>
</dbReference>
<dbReference type="ExpressionAtlas" id="Q91YT0">
    <property type="expression patterns" value="baseline and differential"/>
</dbReference>
<dbReference type="GO" id="GO:0005743">
    <property type="term" value="C:mitochondrial inner membrane"/>
    <property type="evidence" value="ECO:0000314"/>
    <property type="project" value="UniProtKB"/>
</dbReference>
<dbReference type="GO" id="GO:0005739">
    <property type="term" value="C:mitochondrion"/>
    <property type="evidence" value="ECO:0007005"/>
    <property type="project" value="MGI"/>
</dbReference>
<dbReference type="GO" id="GO:0045271">
    <property type="term" value="C:respiratory chain complex I"/>
    <property type="evidence" value="ECO:0000314"/>
    <property type="project" value="UniProtKB"/>
</dbReference>
<dbReference type="GO" id="GO:0051539">
    <property type="term" value="F:4 iron, 4 sulfur cluster binding"/>
    <property type="evidence" value="ECO:0007669"/>
    <property type="project" value="UniProtKB-KW"/>
</dbReference>
<dbReference type="GO" id="GO:0010181">
    <property type="term" value="F:FMN binding"/>
    <property type="evidence" value="ECO:0007669"/>
    <property type="project" value="InterPro"/>
</dbReference>
<dbReference type="GO" id="GO:0046872">
    <property type="term" value="F:metal ion binding"/>
    <property type="evidence" value="ECO:0007669"/>
    <property type="project" value="UniProtKB-KW"/>
</dbReference>
<dbReference type="GO" id="GO:0051287">
    <property type="term" value="F:NAD binding"/>
    <property type="evidence" value="ECO:0007669"/>
    <property type="project" value="InterPro"/>
</dbReference>
<dbReference type="GO" id="GO:0008137">
    <property type="term" value="F:NADH dehydrogenase (ubiquinone) activity"/>
    <property type="evidence" value="ECO:0000314"/>
    <property type="project" value="UniProtKB"/>
</dbReference>
<dbReference type="GO" id="GO:0009060">
    <property type="term" value="P:aerobic respiration"/>
    <property type="evidence" value="ECO:0000303"/>
    <property type="project" value="ComplexPortal"/>
</dbReference>
<dbReference type="GO" id="GO:0006120">
    <property type="term" value="P:mitochondrial electron transport, NADH to ubiquinone"/>
    <property type="evidence" value="ECO:0000314"/>
    <property type="project" value="UniProtKB"/>
</dbReference>
<dbReference type="GO" id="GO:0042776">
    <property type="term" value="P:proton motive force-driven mitochondrial ATP synthesis"/>
    <property type="evidence" value="ECO:0000303"/>
    <property type="project" value="ComplexPortal"/>
</dbReference>
<dbReference type="FunFam" id="1.20.1440.230:FF:000001">
    <property type="entry name" value="Mitochondrial NADH dehydrogenase flavoprotein 1"/>
    <property type="match status" value="1"/>
</dbReference>
<dbReference type="FunFam" id="3.10.20.600:FF:000001">
    <property type="entry name" value="NADH dehydrogenase [ubiquinone] flavoprotein 1, mitochondrial"/>
    <property type="match status" value="1"/>
</dbReference>
<dbReference type="FunFam" id="3.40.50.11540:FF:000001">
    <property type="entry name" value="NADH dehydrogenase [ubiquinone] flavoprotein 1, mitochondrial"/>
    <property type="match status" value="1"/>
</dbReference>
<dbReference type="Gene3D" id="3.10.20.600">
    <property type="match status" value="1"/>
</dbReference>
<dbReference type="Gene3D" id="3.40.50.11540">
    <property type="entry name" value="NADH-ubiquinone oxidoreductase 51kDa subunit"/>
    <property type="match status" value="1"/>
</dbReference>
<dbReference type="Gene3D" id="1.20.1440.230">
    <property type="entry name" value="NADH-ubiquinone oxidoreductase 51kDa subunit, iron-sulphur binding domain"/>
    <property type="match status" value="1"/>
</dbReference>
<dbReference type="InterPro" id="IPR050837">
    <property type="entry name" value="ComplexI_51kDa_subunit"/>
</dbReference>
<dbReference type="InterPro" id="IPR001949">
    <property type="entry name" value="NADH-UbQ_OxRdtase_51kDa_CS"/>
</dbReference>
<dbReference type="InterPro" id="IPR011537">
    <property type="entry name" value="NADH-UbQ_OxRdtase_suF"/>
</dbReference>
<dbReference type="InterPro" id="IPR011538">
    <property type="entry name" value="Nuo51_FMN-bd"/>
</dbReference>
<dbReference type="InterPro" id="IPR037225">
    <property type="entry name" value="Nuo51_FMN-bd_sf"/>
</dbReference>
<dbReference type="InterPro" id="IPR019575">
    <property type="entry name" value="Nuop51_4Fe4S-bd"/>
</dbReference>
<dbReference type="InterPro" id="IPR037207">
    <property type="entry name" value="Nuop51_4Fe4S-bd_sf"/>
</dbReference>
<dbReference type="InterPro" id="IPR054765">
    <property type="entry name" value="SLBB_dom"/>
</dbReference>
<dbReference type="NCBIfam" id="TIGR01959">
    <property type="entry name" value="nuoF_fam"/>
    <property type="match status" value="1"/>
</dbReference>
<dbReference type="NCBIfam" id="NF010120">
    <property type="entry name" value="PRK13596.1"/>
    <property type="match status" value="1"/>
</dbReference>
<dbReference type="PANTHER" id="PTHR11780:SF10">
    <property type="entry name" value="NADH DEHYDROGENASE [UBIQUINONE] FLAVOPROTEIN 1, MITOCHONDRIAL"/>
    <property type="match status" value="1"/>
</dbReference>
<dbReference type="PANTHER" id="PTHR11780">
    <property type="entry name" value="NADH-UBIQUINONE OXIDOREDUCTASE FLAVOPROTEIN 1 NDUFV1"/>
    <property type="match status" value="1"/>
</dbReference>
<dbReference type="Pfam" id="PF01512">
    <property type="entry name" value="Complex1_51K"/>
    <property type="match status" value="1"/>
</dbReference>
<dbReference type="Pfam" id="PF10589">
    <property type="entry name" value="NADH_4Fe-4S"/>
    <property type="match status" value="1"/>
</dbReference>
<dbReference type="Pfam" id="PF22461">
    <property type="entry name" value="SLBB_2"/>
    <property type="match status" value="1"/>
</dbReference>
<dbReference type="SMART" id="SM00928">
    <property type="entry name" value="NADH_4Fe-4S"/>
    <property type="match status" value="1"/>
</dbReference>
<dbReference type="SUPFAM" id="SSF142019">
    <property type="entry name" value="Nqo1 FMN-binding domain-like"/>
    <property type="match status" value="1"/>
</dbReference>
<dbReference type="SUPFAM" id="SSF142984">
    <property type="entry name" value="Nqo1 middle domain-like"/>
    <property type="match status" value="1"/>
</dbReference>
<dbReference type="SUPFAM" id="SSF140490">
    <property type="entry name" value="Nqo1C-terminal domain-like"/>
    <property type="match status" value="1"/>
</dbReference>
<dbReference type="PROSITE" id="PS00644">
    <property type="entry name" value="COMPLEX1_51K_1"/>
    <property type="match status" value="1"/>
</dbReference>
<dbReference type="PROSITE" id="PS00645">
    <property type="entry name" value="COMPLEX1_51K_2"/>
    <property type="match status" value="1"/>
</dbReference>
<protein>
    <recommendedName>
        <fullName>NADH dehydrogenase [ubiquinone] flavoprotein 1, mitochondrial</fullName>
        <shortName evidence="7">NDUFV1</shortName>
        <ecNumber evidence="4">7.1.1.2</ecNumber>
    </recommendedName>
    <alternativeName>
        <fullName>Complex I-51kD</fullName>
        <shortName>CI-51kD</shortName>
    </alternativeName>
    <alternativeName>
        <fullName evidence="2">NADH-ubiquinone oxidoreductase 51 kDa subunit</fullName>
    </alternativeName>
</protein>
<keyword id="KW-0002">3D-structure</keyword>
<keyword id="KW-0004">4Fe-4S</keyword>
<keyword id="KW-0007">Acetylation</keyword>
<keyword id="KW-0903">Direct protein sequencing</keyword>
<keyword id="KW-0249">Electron transport</keyword>
<keyword id="KW-0285">Flavoprotein</keyword>
<keyword id="KW-0288">FMN</keyword>
<keyword id="KW-0408">Iron</keyword>
<keyword id="KW-0411">Iron-sulfur</keyword>
<keyword id="KW-0472">Membrane</keyword>
<keyword id="KW-0479">Metal-binding</keyword>
<keyword id="KW-0488">Methylation</keyword>
<keyword id="KW-0496">Mitochondrion</keyword>
<keyword id="KW-0999">Mitochondrion inner membrane</keyword>
<keyword id="KW-0520">NAD</keyword>
<keyword id="KW-0560">Oxidoreductase</keyword>
<keyword id="KW-1185">Reference proteome</keyword>
<keyword id="KW-0679">Respiratory chain</keyword>
<keyword id="KW-0809">Transit peptide</keyword>
<keyword id="KW-1278">Translocase</keyword>
<keyword id="KW-0813">Transport</keyword>
<keyword id="KW-0830">Ubiquinone</keyword>
<gene>
    <name evidence="10" type="primary">Ndufv1</name>
</gene>